<dbReference type="EMBL" id="X15890">
    <property type="protein sequence ID" value="CAA33899.1"/>
    <property type="molecule type" value="Genomic_RNA"/>
</dbReference>
<dbReference type="EMBL" id="AF348180">
    <property type="protein sequence ID" value="AAK51722.1"/>
    <property type="molecule type" value="Genomic_RNA"/>
</dbReference>
<dbReference type="EMBL" id="AF348181">
    <property type="protein sequence ID" value="AAK51723.1"/>
    <property type="molecule type" value="Genomic_RNA"/>
</dbReference>
<dbReference type="EMBL" id="AF348182">
    <property type="protein sequence ID" value="AAK51724.1"/>
    <property type="molecule type" value="Genomic_RNA"/>
</dbReference>
<dbReference type="EMBL" id="AF348183">
    <property type="protein sequence ID" value="AAK51725.1"/>
    <property type="molecule type" value="Genomic_RNA"/>
</dbReference>
<dbReference type="SMR" id="P22435"/>
<dbReference type="DIP" id="DIP-61687N"/>
<dbReference type="IntAct" id="P22435">
    <property type="interactions" value="1"/>
</dbReference>
<dbReference type="PRO" id="PR:P22435"/>
<dbReference type="Proteomes" id="UP000142359">
    <property type="component" value="Genome"/>
</dbReference>
<dbReference type="GO" id="GO:0019029">
    <property type="term" value="C:helical viral capsid"/>
    <property type="evidence" value="ECO:0007669"/>
    <property type="project" value="UniProtKB-UniRule"/>
</dbReference>
<dbReference type="GO" id="GO:0043657">
    <property type="term" value="C:host cell"/>
    <property type="evidence" value="ECO:0007669"/>
    <property type="project" value="GOC"/>
</dbReference>
<dbReference type="GO" id="GO:0042025">
    <property type="term" value="C:host cell nucleus"/>
    <property type="evidence" value="ECO:0007669"/>
    <property type="project" value="UniProtKB-SubCell"/>
</dbReference>
<dbReference type="GO" id="GO:1990904">
    <property type="term" value="C:ribonucleoprotein complex"/>
    <property type="evidence" value="ECO:0007669"/>
    <property type="project" value="UniProtKB-KW"/>
</dbReference>
<dbReference type="GO" id="GO:0019013">
    <property type="term" value="C:viral nucleocapsid"/>
    <property type="evidence" value="ECO:0007669"/>
    <property type="project" value="UniProtKB-UniRule"/>
</dbReference>
<dbReference type="GO" id="GO:0003723">
    <property type="term" value="F:RNA binding"/>
    <property type="evidence" value="ECO:0007669"/>
    <property type="project" value="UniProtKB-UniRule"/>
</dbReference>
<dbReference type="GO" id="GO:0005198">
    <property type="term" value="F:structural molecule activity"/>
    <property type="evidence" value="ECO:0007669"/>
    <property type="project" value="UniProtKB-UniRule"/>
</dbReference>
<dbReference type="GO" id="GO:0046718">
    <property type="term" value="P:symbiont entry into host cell"/>
    <property type="evidence" value="ECO:0007669"/>
    <property type="project" value="UniProtKB-KW"/>
</dbReference>
<dbReference type="GO" id="GO:0075732">
    <property type="term" value="P:viral penetration into host nucleus"/>
    <property type="evidence" value="ECO:0007669"/>
    <property type="project" value="UniProtKB-UniRule"/>
</dbReference>
<dbReference type="HAMAP" id="MF_04070">
    <property type="entry name" value="INFV_NCAP"/>
    <property type="match status" value="1"/>
</dbReference>
<dbReference type="InterPro" id="IPR002141">
    <property type="entry name" value="Flu_NP"/>
</dbReference>
<dbReference type="Pfam" id="PF00506">
    <property type="entry name" value="Flu_NP"/>
    <property type="match status" value="1"/>
</dbReference>
<dbReference type="SUPFAM" id="SSF161003">
    <property type="entry name" value="flu NP-like"/>
    <property type="match status" value="1"/>
</dbReference>
<accession>P22435</accession>
<accession>Q91MA3</accession>
<accession>Q91MA4</accession>
<accession>Q91MA5</accession>
<accession>Q91MA6</accession>
<protein>
    <recommendedName>
        <fullName evidence="1">Nucleoprotein</fullName>
    </recommendedName>
    <alternativeName>
        <fullName evidence="1">Nucleocapsid protein</fullName>
        <shortName evidence="1">Protein N</shortName>
    </alternativeName>
</protein>
<comment type="function">
    <text evidence="1">Encapsidates the negative strand viral RNA, protecting it from nucleases. The encapsidated genomic RNA is termed the ribonucleoprotein (RNP) and serves as template for transcription and replication. The RNP needs to be localized in the host nucleus to start an infectious cycle, but is too large to diffuse through the nuclear pore complex. NP comprises at least 2 nuclear localization signals that are responsible for the active RNP import into the nucleus through cellular importin alpha/beta pathway. Later in the infection, nclear export of RNPs are mediated through viral proteins NEP interacting with M1 which binds nucleoproteins. It is possible that nucleoprotein binds directly host exportin-1/XPO1 and plays an active role in RNPs nuclear export. M1 interaction with RNP seems to hide nucleoprotein's nuclear localization signals. Soon after a virion infects a new cell, M1 dissociates from the RNP under acidification of the virion driven by M2 protein. Dissociation of M1 from RNP unmasks nucleoprotein's nuclear localization signals, targeting the RNP to the nucleus.</text>
</comment>
<comment type="subunit">
    <text evidence="1">Homomultimerizes to form the nucleocapsid. May bind host exportin-1/XPO1. Binds to viral genomic RNA. Protein-RNA contacts are mediated by a combination of electrostatic interactions between positively charged residues and the phosphate backbone and planar interactions between aromatic side chains and bases.</text>
</comment>
<comment type="subcellular location">
    <subcellularLocation>
        <location evidence="1">Virion</location>
    </subcellularLocation>
    <subcellularLocation>
        <location evidence="1">Host nucleus</location>
    </subcellularLocation>
</comment>
<comment type="PTM">
    <text evidence="1">Late in virus-infected cells, may be cleaved from a 56-kDa protein to a 53-kDa protein by a cellular caspase. This cleavage might be a marker for the onset of apoptosis in infected cells or have a specific function in virus host interaction.</text>
</comment>
<comment type="similarity">
    <text evidence="1">Belongs to the influenza viruses nucleoprotein family.</text>
</comment>
<organismHost>
    <name type="scientific">Aves</name>
    <dbReference type="NCBI Taxonomy" id="8782"/>
</organismHost>
<organismHost>
    <name type="scientific">Cetacea</name>
    <name type="common">whales</name>
    <dbReference type="NCBI Taxonomy" id="9721"/>
</organismHost>
<organismHost>
    <name type="scientific">Homo sapiens</name>
    <name type="common">Human</name>
    <dbReference type="NCBI Taxonomy" id="9606"/>
</organismHost>
<organismHost>
    <name type="scientific">Phocidae</name>
    <name type="common">true seals</name>
    <dbReference type="NCBI Taxonomy" id="9709"/>
</organismHost>
<organismHost>
    <name type="scientific">Sus scrofa</name>
    <name type="common">Pig</name>
    <dbReference type="NCBI Taxonomy" id="9823"/>
</organismHost>
<proteinExistence type="inferred from homology"/>
<sequence length="498" mass="56026">MASQGTKRSYEQMETDGERQNATEIRASVGKMIDGIGRFYIQMCTELKLSDYEGRLIQNSLTIERMVLSAFDERRNKYLEEHPSAGKDPKKTGGPIYKRVDGKWMRELVLYDKEEIRRIWRQANNGDDATAGLTHMMIWHSNLNDTTYQRTRALVRTGMDPRMCSLMQGSTLPRRSGAAGAAVKGVGTMVMELIRMIKRGINDRNFWRGENGRKTRSAYERMCNILKGKFQTAAQRAMMDQVRESRNPGNAEIEDLIFLARSALILRGSVAHKSCLPACVYGPAVASGYDFEKEGYSLVGIDPFKLLQNSQVYSLIRPNENPAHKSQLVWMACNSAAFEDLRVLSFIRGTKVSPRGKLSTRGVQIASNENMDAMESSTLELRSRYWAIRTRSGGNTNQQRASAGQISVQPAFSVQRNLPFDKPTIMAAFTGNTEGRTSDMRAEIIRMMEGAKPEEMSFQGRGVFELSDEKAANPIVPSFDMSNEGSYFFGDNAEEYDN</sequence>
<keyword id="KW-0167">Capsid protein</keyword>
<keyword id="KW-1139">Helical capsid protein</keyword>
<keyword id="KW-1048">Host nucleus</keyword>
<keyword id="KW-0945">Host-virus interaction</keyword>
<keyword id="KW-0687">Ribonucleoprotein</keyword>
<keyword id="KW-0694">RNA-binding</keyword>
<keyword id="KW-0543">Viral nucleoprotein</keyword>
<keyword id="KW-1163">Viral penetration into host nucleus</keyword>
<keyword id="KW-0946">Virion</keyword>
<keyword id="KW-1160">Virus entry into host cell</keyword>
<name>NCAP_I68A4</name>
<reference key="1">
    <citation type="journal article" date="1989" name="Nucleic Acids Res.">
        <title>Sequence of the nucleoprotein (NP) gene of the influenza A virus reassortant 81/HO, carrying the NP originally derived from A/Hong Kong/1/68 (H3N2).</title>
        <authorList>
            <person name="Reinhardt U."/>
            <person name="Mandler J."/>
            <person name="Scholtissek C."/>
        </authorList>
    </citation>
    <scope>NUCLEOTIDE SEQUENCE [GENOMIC RNA]</scope>
</reference>
<reference key="2">
    <citation type="journal article" date="2001" name="Proc. Natl. Acad. Sci. U.S.A.">
        <title>Pattern of mutation in the genome of influenza A virus on adaptation to increased virulence in the mouse lung: identification of functional themes.</title>
        <authorList>
            <person name="Brown E.G."/>
            <person name="Liu H."/>
            <person name="Kit L.C."/>
            <person name="Baird S."/>
            <person name="Nesrallah M."/>
        </authorList>
    </citation>
    <scope>NUCLEOTIDE SEQUENCE [GENOMIC RNA]</scope>
    <source>
        <strain>Isolate MA12</strain>
        <strain>Isolate MA20</strain>
        <strain>Isolate MA20c</strain>
    </source>
</reference>
<feature type="chain" id="PRO_0000079064" description="Nucleoprotein">
    <location>
        <begin position="1"/>
        <end position="498"/>
    </location>
</feature>
<feature type="region of interest" description="Disordered" evidence="2">
    <location>
        <begin position="1"/>
        <end position="21"/>
    </location>
</feature>
<feature type="short sequence motif" description="Unconventional nuclear localization signal" evidence="1">
    <location>
        <begin position="1"/>
        <end position="18"/>
    </location>
</feature>
<feature type="short sequence motif" description="Bipartite nuclear localization signal" evidence="1">
    <location>
        <begin position="198"/>
        <end position="216"/>
    </location>
</feature>
<feature type="compositionally biased region" description="Basic and acidic residues" evidence="2">
    <location>
        <begin position="8"/>
        <end position="21"/>
    </location>
</feature>
<feature type="sequence variant" description="In strain: Isolate MA12, Isolate MA20 and Isolate MA20c.">
    <original>D</original>
    <variation>N</variation>
    <location>
        <position position="34"/>
    </location>
</feature>
<feature type="sequence variant" description="In strain: Isolate MA20c.">
    <original>D</original>
    <variation>N</variation>
    <location>
        <position position="480"/>
    </location>
</feature>
<feature type="sequence conflict" description="In Ref. 1; CAA33899." ref="1">
    <original>Q</original>
    <variation>H</variation>
    <location>
        <position position="311"/>
    </location>
</feature>
<organism>
    <name type="scientific">Influenza A virus (strain A/Hong Kong/1/1968 H3N2)</name>
    <dbReference type="NCBI Taxonomy" id="506350"/>
    <lineage>
        <taxon>Viruses</taxon>
        <taxon>Riboviria</taxon>
        <taxon>Orthornavirae</taxon>
        <taxon>Negarnaviricota</taxon>
        <taxon>Polyploviricotina</taxon>
        <taxon>Insthoviricetes</taxon>
        <taxon>Articulavirales</taxon>
        <taxon>Orthomyxoviridae</taxon>
        <taxon>Alphainfluenzavirus</taxon>
        <taxon>Alphainfluenzavirus influenzae</taxon>
        <taxon>Influenza A virus</taxon>
    </lineage>
</organism>
<gene>
    <name evidence="1" type="primary">NP</name>
</gene>
<evidence type="ECO:0000255" key="1">
    <source>
        <dbReference type="HAMAP-Rule" id="MF_04070"/>
    </source>
</evidence>
<evidence type="ECO:0000256" key="2">
    <source>
        <dbReference type="SAM" id="MobiDB-lite"/>
    </source>
</evidence>